<evidence type="ECO:0000255" key="1">
    <source>
        <dbReference type="HAMAP-Rule" id="MF_00454"/>
    </source>
</evidence>
<organism>
    <name type="scientific">Burkholderia orbicola (strain AU 1054)</name>
    <dbReference type="NCBI Taxonomy" id="331271"/>
    <lineage>
        <taxon>Bacteria</taxon>
        <taxon>Pseudomonadati</taxon>
        <taxon>Pseudomonadota</taxon>
        <taxon>Betaproteobacteria</taxon>
        <taxon>Burkholderiales</taxon>
        <taxon>Burkholderiaceae</taxon>
        <taxon>Burkholderia</taxon>
        <taxon>Burkholderia cepacia complex</taxon>
        <taxon>Burkholderia orbicola</taxon>
    </lineage>
</organism>
<name>FLUC_BURO1</name>
<comment type="function">
    <text evidence="1">Fluoride-specific ion channel. Important for reducing fluoride concentration in the cell, thus reducing its toxicity.</text>
</comment>
<comment type="catalytic activity">
    <reaction evidence="1">
        <text>fluoride(in) = fluoride(out)</text>
        <dbReference type="Rhea" id="RHEA:76159"/>
        <dbReference type="ChEBI" id="CHEBI:17051"/>
    </reaction>
    <physiologicalReaction direction="left-to-right" evidence="1">
        <dbReference type="Rhea" id="RHEA:76160"/>
    </physiologicalReaction>
</comment>
<comment type="activity regulation">
    <text evidence="1">Na(+) is not transported, but it plays an essential structural role and its presence is essential for fluoride channel function.</text>
</comment>
<comment type="subcellular location">
    <subcellularLocation>
        <location evidence="1">Cell inner membrane</location>
        <topology evidence="1">Multi-pass membrane protein</topology>
    </subcellularLocation>
</comment>
<comment type="similarity">
    <text evidence="1">Belongs to the fluoride channel Fluc/FEX (TC 1.A.43) family.</text>
</comment>
<reference key="1">
    <citation type="submission" date="2006-05" db="EMBL/GenBank/DDBJ databases">
        <title>Complete sequence of chromosome 1 of Burkholderia cenocepacia AU 1054.</title>
        <authorList>
            <consortium name="US DOE Joint Genome Institute"/>
            <person name="Copeland A."/>
            <person name="Lucas S."/>
            <person name="Lapidus A."/>
            <person name="Barry K."/>
            <person name="Detter J.C."/>
            <person name="Glavina del Rio T."/>
            <person name="Hammon N."/>
            <person name="Israni S."/>
            <person name="Dalin E."/>
            <person name="Tice H."/>
            <person name="Pitluck S."/>
            <person name="Chain P."/>
            <person name="Malfatti S."/>
            <person name="Shin M."/>
            <person name="Vergez L."/>
            <person name="Schmutz J."/>
            <person name="Larimer F."/>
            <person name="Land M."/>
            <person name="Hauser L."/>
            <person name="Kyrpides N."/>
            <person name="Lykidis A."/>
            <person name="LiPuma J.J."/>
            <person name="Konstantinidis K."/>
            <person name="Tiedje J.M."/>
            <person name="Richardson P."/>
        </authorList>
    </citation>
    <scope>NUCLEOTIDE SEQUENCE [LARGE SCALE GENOMIC DNA]</scope>
    <source>
        <strain>AU 1054</strain>
    </source>
</reference>
<feature type="chain" id="PRO_0000252861" description="Fluoride-specific ion channel FluC">
    <location>
        <begin position="1"/>
        <end position="128"/>
    </location>
</feature>
<feature type="transmembrane region" description="Helical" evidence="1">
    <location>
        <begin position="5"/>
        <end position="25"/>
    </location>
</feature>
<feature type="transmembrane region" description="Helical" evidence="1">
    <location>
        <begin position="35"/>
        <end position="55"/>
    </location>
</feature>
<feature type="transmembrane region" description="Helical" evidence="1">
    <location>
        <begin position="67"/>
        <end position="87"/>
    </location>
</feature>
<feature type="transmembrane region" description="Helical" evidence="1">
    <location>
        <begin position="96"/>
        <end position="116"/>
    </location>
</feature>
<feature type="binding site" evidence="1">
    <location>
        <position position="75"/>
    </location>
    <ligand>
        <name>Na(+)</name>
        <dbReference type="ChEBI" id="CHEBI:29101"/>
        <note>structural</note>
    </ligand>
</feature>
<feature type="binding site" evidence="1">
    <location>
        <position position="78"/>
    </location>
    <ligand>
        <name>Na(+)</name>
        <dbReference type="ChEBI" id="CHEBI:29101"/>
        <note>structural</note>
    </ligand>
</feature>
<accession>Q1BYC6</accession>
<keyword id="KW-0997">Cell inner membrane</keyword>
<keyword id="KW-1003">Cell membrane</keyword>
<keyword id="KW-0407">Ion channel</keyword>
<keyword id="KW-0406">Ion transport</keyword>
<keyword id="KW-0472">Membrane</keyword>
<keyword id="KW-0479">Metal-binding</keyword>
<keyword id="KW-0915">Sodium</keyword>
<keyword id="KW-0812">Transmembrane</keyword>
<keyword id="KW-1133">Transmembrane helix</keyword>
<keyword id="KW-0813">Transport</keyword>
<gene>
    <name evidence="1" type="primary">fluC</name>
    <name evidence="1" type="synonym">crcB</name>
    <name type="ordered locus">Bcen_0467</name>
</gene>
<sequence>MFYSIVAIFVGAGLGALLRWFLSLALNAFFPAVPLGTLASNLIGGYVIGVAAVVFTVRVGLPPEWRLFVITGFLGGLTTFSTYSVEVMTHALEGEFGWALAVAALHLTGSFALTALGMWTARAWLAAA</sequence>
<dbReference type="EMBL" id="CP000378">
    <property type="protein sequence ID" value="ABF75379.1"/>
    <property type="molecule type" value="Genomic_DNA"/>
</dbReference>
<dbReference type="SMR" id="Q1BYC6"/>
<dbReference type="HOGENOM" id="CLU_114342_3_3_4"/>
<dbReference type="GO" id="GO:0005886">
    <property type="term" value="C:plasma membrane"/>
    <property type="evidence" value="ECO:0007669"/>
    <property type="project" value="UniProtKB-SubCell"/>
</dbReference>
<dbReference type="GO" id="GO:0062054">
    <property type="term" value="F:fluoride channel activity"/>
    <property type="evidence" value="ECO:0007669"/>
    <property type="project" value="UniProtKB-UniRule"/>
</dbReference>
<dbReference type="GO" id="GO:0046872">
    <property type="term" value="F:metal ion binding"/>
    <property type="evidence" value="ECO:0007669"/>
    <property type="project" value="UniProtKB-KW"/>
</dbReference>
<dbReference type="GO" id="GO:0140114">
    <property type="term" value="P:cellular detoxification of fluoride"/>
    <property type="evidence" value="ECO:0007669"/>
    <property type="project" value="UniProtKB-UniRule"/>
</dbReference>
<dbReference type="HAMAP" id="MF_00454">
    <property type="entry name" value="FluC"/>
    <property type="match status" value="1"/>
</dbReference>
<dbReference type="InterPro" id="IPR003691">
    <property type="entry name" value="FluC"/>
</dbReference>
<dbReference type="NCBIfam" id="TIGR00494">
    <property type="entry name" value="crcB"/>
    <property type="match status" value="1"/>
</dbReference>
<dbReference type="NCBIfam" id="NF010792">
    <property type="entry name" value="PRK14196.1"/>
    <property type="match status" value="1"/>
</dbReference>
<dbReference type="PANTHER" id="PTHR28259">
    <property type="entry name" value="FLUORIDE EXPORT PROTEIN 1-RELATED"/>
    <property type="match status" value="1"/>
</dbReference>
<dbReference type="PANTHER" id="PTHR28259:SF1">
    <property type="entry name" value="FLUORIDE EXPORT PROTEIN 1-RELATED"/>
    <property type="match status" value="1"/>
</dbReference>
<dbReference type="Pfam" id="PF02537">
    <property type="entry name" value="CRCB"/>
    <property type="match status" value="1"/>
</dbReference>
<proteinExistence type="inferred from homology"/>
<protein>
    <recommendedName>
        <fullName evidence="1">Fluoride-specific ion channel FluC</fullName>
    </recommendedName>
</protein>